<organism>
    <name type="scientific">Synechococcus elongatus (strain ATCC 33912 / PCC 7942 / FACHB-805)</name>
    <name type="common">Anacystis nidulans R2</name>
    <dbReference type="NCBI Taxonomy" id="1140"/>
    <lineage>
        <taxon>Bacteria</taxon>
        <taxon>Bacillati</taxon>
        <taxon>Cyanobacteriota</taxon>
        <taxon>Cyanophyceae</taxon>
        <taxon>Synechococcales</taxon>
        <taxon>Synechococcaceae</taxon>
        <taxon>Synechococcus</taxon>
    </lineage>
</organism>
<keyword id="KW-1185">Reference proteome</keyword>
<keyword id="KW-0687">Ribonucleoprotein</keyword>
<keyword id="KW-0689">Ribosomal protein</keyword>
<keyword id="KW-0694">RNA-binding</keyword>
<keyword id="KW-0699">rRNA-binding</keyword>
<protein>
    <recommendedName>
        <fullName evidence="1">Large ribosomal subunit protein bL31</fullName>
    </recommendedName>
    <alternativeName>
        <fullName evidence="2">50S ribosomal protein L31</fullName>
    </alternativeName>
</protein>
<name>RL31_SYNE7</name>
<comment type="function">
    <text evidence="1">Binds the 23S rRNA.</text>
</comment>
<comment type="subunit">
    <text evidence="1">Part of the 50S ribosomal subunit.</text>
</comment>
<comment type="similarity">
    <text evidence="1">Belongs to the bacterial ribosomal protein bL31 family. Type A subfamily.</text>
</comment>
<dbReference type="EMBL" id="CP000100">
    <property type="protein sequence ID" value="ABB58234.1"/>
    <property type="molecule type" value="Genomic_DNA"/>
</dbReference>
<dbReference type="RefSeq" id="WP_011244203.1">
    <property type="nucleotide sequence ID" value="NZ_JACJTX010000001.1"/>
</dbReference>
<dbReference type="STRING" id="1140.Synpcc7942_2204"/>
<dbReference type="PaxDb" id="1140-Synpcc7942_2204"/>
<dbReference type="GeneID" id="72431087"/>
<dbReference type="KEGG" id="syf:Synpcc7942_2204"/>
<dbReference type="eggNOG" id="COG0254">
    <property type="taxonomic scope" value="Bacteria"/>
</dbReference>
<dbReference type="HOGENOM" id="CLU_114306_1_2_3"/>
<dbReference type="OrthoDB" id="9803251at2"/>
<dbReference type="BioCyc" id="SYNEL:SYNPCC7942_2204-MONOMER"/>
<dbReference type="Proteomes" id="UP000889800">
    <property type="component" value="Chromosome"/>
</dbReference>
<dbReference type="GO" id="GO:1990904">
    <property type="term" value="C:ribonucleoprotein complex"/>
    <property type="evidence" value="ECO:0007669"/>
    <property type="project" value="UniProtKB-KW"/>
</dbReference>
<dbReference type="GO" id="GO:0005840">
    <property type="term" value="C:ribosome"/>
    <property type="evidence" value="ECO:0007669"/>
    <property type="project" value="UniProtKB-KW"/>
</dbReference>
<dbReference type="GO" id="GO:0019843">
    <property type="term" value="F:rRNA binding"/>
    <property type="evidence" value="ECO:0007669"/>
    <property type="project" value="UniProtKB-KW"/>
</dbReference>
<dbReference type="GO" id="GO:0003735">
    <property type="term" value="F:structural constituent of ribosome"/>
    <property type="evidence" value="ECO:0007669"/>
    <property type="project" value="InterPro"/>
</dbReference>
<dbReference type="GO" id="GO:0006412">
    <property type="term" value="P:translation"/>
    <property type="evidence" value="ECO:0007669"/>
    <property type="project" value="UniProtKB-UniRule"/>
</dbReference>
<dbReference type="Gene3D" id="4.10.830.30">
    <property type="entry name" value="Ribosomal protein L31"/>
    <property type="match status" value="1"/>
</dbReference>
<dbReference type="HAMAP" id="MF_00501">
    <property type="entry name" value="Ribosomal_bL31_1"/>
    <property type="match status" value="1"/>
</dbReference>
<dbReference type="InterPro" id="IPR034704">
    <property type="entry name" value="Ribosomal_bL28/bL31-like_sf"/>
</dbReference>
<dbReference type="InterPro" id="IPR002150">
    <property type="entry name" value="Ribosomal_bL31"/>
</dbReference>
<dbReference type="InterPro" id="IPR027491">
    <property type="entry name" value="Ribosomal_bL31_A"/>
</dbReference>
<dbReference type="InterPro" id="IPR042105">
    <property type="entry name" value="Ribosomal_bL31_sf"/>
</dbReference>
<dbReference type="NCBIfam" id="TIGR00105">
    <property type="entry name" value="L31"/>
    <property type="match status" value="1"/>
</dbReference>
<dbReference type="NCBIfam" id="NF000612">
    <property type="entry name" value="PRK00019.1"/>
    <property type="match status" value="1"/>
</dbReference>
<dbReference type="NCBIfam" id="NF001809">
    <property type="entry name" value="PRK00528.1"/>
    <property type="match status" value="1"/>
</dbReference>
<dbReference type="PANTHER" id="PTHR33280">
    <property type="entry name" value="50S RIBOSOMAL PROTEIN L31, CHLOROPLASTIC"/>
    <property type="match status" value="1"/>
</dbReference>
<dbReference type="PANTHER" id="PTHR33280:SF1">
    <property type="entry name" value="LARGE RIBOSOMAL SUBUNIT PROTEIN BL31C"/>
    <property type="match status" value="1"/>
</dbReference>
<dbReference type="Pfam" id="PF01197">
    <property type="entry name" value="Ribosomal_L31"/>
    <property type="match status" value="1"/>
</dbReference>
<dbReference type="PRINTS" id="PR01249">
    <property type="entry name" value="RIBOSOMALL31"/>
</dbReference>
<dbReference type="SUPFAM" id="SSF143800">
    <property type="entry name" value="L28p-like"/>
    <property type="match status" value="1"/>
</dbReference>
<dbReference type="PROSITE" id="PS01143">
    <property type="entry name" value="RIBOSOMAL_L31"/>
    <property type="match status" value="1"/>
</dbReference>
<reference key="1">
    <citation type="submission" date="2005-08" db="EMBL/GenBank/DDBJ databases">
        <title>Complete sequence of chromosome 1 of Synechococcus elongatus PCC 7942.</title>
        <authorList>
            <consortium name="US DOE Joint Genome Institute"/>
            <person name="Copeland A."/>
            <person name="Lucas S."/>
            <person name="Lapidus A."/>
            <person name="Barry K."/>
            <person name="Detter J.C."/>
            <person name="Glavina T."/>
            <person name="Hammon N."/>
            <person name="Israni S."/>
            <person name="Pitluck S."/>
            <person name="Schmutz J."/>
            <person name="Larimer F."/>
            <person name="Land M."/>
            <person name="Kyrpides N."/>
            <person name="Lykidis A."/>
            <person name="Golden S."/>
            <person name="Richardson P."/>
        </authorList>
    </citation>
    <scope>NUCLEOTIDE SEQUENCE [LARGE SCALE GENOMIC DNA]</scope>
    <source>
        <strain>ATCC 33912 / PCC 7942 / FACHB-805</strain>
    </source>
</reference>
<evidence type="ECO:0000255" key="1">
    <source>
        <dbReference type="HAMAP-Rule" id="MF_00501"/>
    </source>
</evidence>
<evidence type="ECO:0000305" key="2"/>
<sequence length="77" mass="8799">MPKADIHPQWYPEAKVYCNGEEVMTVGSTQPELHVDVWSGNHPFYTGTQKIIDTEGRVERFLRKYGMLEGDQAKSEA</sequence>
<proteinExistence type="inferred from homology"/>
<accession>Q31L35</accession>
<gene>
    <name evidence="1" type="primary">rpmE</name>
    <name evidence="1" type="synonym">rpl31</name>
    <name type="ordered locus">Synpcc7942_2204</name>
</gene>
<feature type="chain" id="PRO_0000259238" description="Large ribosomal subunit protein bL31">
    <location>
        <begin position="1"/>
        <end position="77"/>
    </location>
</feature>